<sequence length="255" mass="27636">MRILCTNDDGIYAPGLEIIEQIAKDLSDDVWVVAPEHDQSGVSHSLTLNDPLRLRQIGPRHFAVKGTPTDCVIMGSRYILADKAPDLVLSGVNRGRNLAEDVVYSGTVAGALEGTMLGLPSFALSQEFSMETGDRPVWETARTFAPQILRRVIEIGIPKNTVVNVNFPACAPEDVAGVLVTRMGKRNLGFLKIDERRDGRGNPYFWIGFEKADDADTPASGSDLAAIAGQCVSVTPLRLDRTDEAFAAILTAKLK</sequence>
<organism>
    <name type="scientific">Nitrobacter winogradskyi (strain ATCC 25391 / DSM 10237 / CIP 104748 / NCIMB 11846 / Nb-255)</name>
    <dbReference type="NCBI Taxonomy" id="323098"/>
    <lineage>
        <taxon>Bacteria</taxon>
        <taxon>Pseudomonadati</taxon>
        <taxon>Pseudomonadota</taxon>
        <taxon>Alphaproteobacteria</taxon>
        <taxon>Hyphomicrobiales</taxon>
        <taxon>Nitrobacteraceae</taxon>
        <taxon>Nitrobacter</taxon>
    </lineage>
</organism>
<protein>
    <recommendedName>
        <fullName evidence="1">5'-nucleotidase SurE</fullName>
        <ecNumber evidence="1">3.1.3.5</ecNumber>
    </recommendedName>
    <alternativeName>
        <fullName evidence="1">Nucleoside 5'-monophosphate phosphohydrolase</fullName>
    </alternativeName>
</protein>
<name>SURE_NITWN</name>
<accession>Q3SRQ5</accession>
<comment type="function">
    <text evidence="1">Nucleotidase that shows phosphatase activity on nucleoside 5'-monophosphates.</text>
</comment>
<comment type="catalytic activity">
    <reaction evidence="1">
        <text>a ribonucleoside 5'-phosphate + H2O = a ribonucleoside + phosphate</text>
        <dbReference type="Rhea" id="RHEA:12484"/>
        <dbReference type="ChEBI" id="CHEBI:15377"/>
        <dbReference type="ChEBI" id="CHEBI:18254"/>
        <dbReference type="ChEBI" id="CHEBI:43474"/>
        <dbReference type="ChEBI" id="CHEBI:58043"/>
        <dbReference type="EC" id="3.1.3.5"/>
    </reaction>
</comment>
<comment type="cofactor">
    <cofactor evidence="1">
        <name>a divalent metal cation</name>
        <dbReference type="ChEBI" id="CHEBI:60240"/>
    </cofactor>
    <text evidence="1">Binds 1 divalent metal cation per subunit.</text>
</comment>
<comment type="subcellular location">
    <subcellularLocation>
        <location evidence="1">Cytoplasm</location>
    </subcellularLocation>
</comment>
<comment type="similarity">
    <text evidence="1">Belongs to the SurE nucleotidase family.</text>
</comment>
<keyword id="KW-0963">Cytoplasm</keyword>
<keyword id="KW-0378">Hydrolase</keyword>
<keyword id="KW-0479">Metal-binding</keyword>
<keyword id="KW-0547">Nucleotide-binding</keyword>
<keyword id="KW-1185">Reference proteome</keyword>
<gene>
    <name evidence="1" type="primary">surE</name>
    <name type="ordered locus">Nwi_1775</name>
</gene>
<proteinExistence type="inferred from homology"/>
<reference key="1">
    <citation type="journal article" date="2006" name="Appl. Environ. Microbiol.">
        <title>Genome sequence of the chemolithoautotrophic nitrite-oxidizing bacterium Nitrobacter winogradskyi Nb-255.</title>
        <authorList>
            <person name="Starkenburg S.R."/>
            <person name="Chain P.S.G."/>
            <person name="Sayavedra-Soto L.A."/>
            <person name="Hauser L."/>
            <person name="Land M.L."/>
            <person name="Larimer F.W."/>
            <person name="Malfatti S.A."/>
            <person name="Klotz M.G."/>
            <person name="Bottomley P.J."/>
            <person name="Arp D.J."/>
            <person name="Hickey W.J."/>
        </authorList>
    </citation>
    <scope>NUCLEOTIDE SEQUENCE [LARGE SCALE GENOMIC DNA]</scope>
    <source>
        <strain>ATCC 25391 / DSM 10237 / CIP 104748 / NCIMB 11846 / Nb-255</strain>
    </source>
</reference>
<feature type="chain" id="PRO_0000235628" description="5'-nucleotidase SurE">
    <location>
        <begin position="1"/>
        <end position="255"/>
    </location>
</feature>
<feature type="binding site" evidence="1">
    <location>
        <position position="8"/>
    </location>
    <ligand>
        <name>a divalent metal cation</name>
        <dbReference type="ChEBI" id="CHEBI:60240"/>
    </ligand>
</feature>
<feature type="binding site" evidence="1">
    <location>
        <position position="9"/>
    </location>
    <ligand>
        <name>a divalent metal cation</name>
        <dbReference type="ChEBI" id="CHEBI:60240"/>
    </ligand>
</feature>
<feature type="binding site" evidence="1">
    <location>
        <position position="40"/>
    </location>
    <ligand>
        <name>a divalent metal cation</name>
        <dbReference type="ChEBI" id="CHEBI:60240"/>
    </ligand>
</feature>
<feature type="binding site" evidence="1">
    <location>
        <position position="93"/>
    </location>
    <ligand>
        <name>a divalent metal cation</name>
        <dbReference type="ChEBI" id="CHEBI:60240"/>
    </ligand>
</feature>
<dbReference type="EC" id="3.1.3.5" evidence="1"/>
<dbReference type="EMBL" id="CP000115">
    <property type="protein sequence ID" value="ABA05036.1"/>
    <property type="molecule type" value="Genomic_DNA"/>
</dbReference>
<dbReference type="RefSeq" id="WP_011315032.1">
    <property type="nucleotide sequence ID" value="NC_007406.1"/>
</dbReference>
<dbReference type="SMR" id="Q3SRQ5"/>
<dbReference type="STRING" id="323098.Nwi_1775"/>
<dbReference type="KEGG" id="nwi:Nwi_1775"/>
<dbReference type="eggNOG" id="COG0496">
    <property type="taxonomic scope" value="Bacteria"/>
</dbReference>
<dbReference type="HOGENOM" id="CLU_045192_1_2_5"/>
<dbReference type="OrthoDB" id="9780815at2"/>
<dbReference type="Proteomes" id="UP000002531">
    <property type="component" value="Chromosome"/>
</dbReference>
<dbReference type="GO" id="GO:0005737">
    <property type="term" value="C:cytoplasm"/>
    <property type="evidence" value="ECO:0007669"/>
    <property type="project" value="UniProtKB-SubCell"/>
</dbReference>
<dbReference type="GO" id="GO:0008254">
    <property type="term" value="F:3'-nucleotidase activity"/>
    <property type="evidence" value="ECO:0007669"/>
    <property type="project" value="TreeGrafter"/>
</dbReference>
<dbReference type="GO" id="GO:0008253">
    <property type="term" value="F:5'-nucleotidase activity"/>
    <property type="evidence" value="ECO:0007669"/>
    <property type="project" value="UniProtKB-UniRule"/>
</dbReference>
<dbReference type="GO" id="GO:0004309">
    <property type="term" value="F:exopolyphosphatase activity"/>
    <property type="evidence" value="ECO:0007669"/>
    <property type="project" value="TreeGrafter"/>
</dbReference>
<dbReference type="GO" id="GO:0046872">
    <property type="term" value="F:metal ion binding"/>
    <property type="evidence" value="ECO:0007669"/>
    <property type="project" value="UniProtKB-UniRule"/>
</dbReference>
<dbReference type="GO" id="GO:0000166">
    <property type="term" value="F:nucleotide binding"/>
    <property type="evidence" value="ECO:0007669"/>
    <property type="project" value="UniProtKB-KW"/>
</dbReference>
<dbReference type="FunFam" id="3.40.1210.10:FF:000001">
    <property type="entry name" value="5'/3'-nucleotidase SurE"/>
    <property type="match status" value="1"/>
</dbReference>
<dbReference type="Gene3D" id="3.40.1210.10">
    <property type="entry name" value="Survival protein SurE-like phosphatase/nucleotidase"/>
    <property type="match status" value="1"/>
</dbReference>
<dbReference type="HAMAP" id="MF_00060">
    <property type="entry name" value="SurE"/>
    <property type="match status" value="1"/>
</dbReference>
<dbReference type="InterPro" id="IPR030048">
    <property type="entry name" value="SurE"/>
</dbReference>
<dbReference type="InterPro" id="IPR002828">
    <property type="entry name" value="SurE-like_Pase/nucleotidase"/>
</dbReference>
<dbReference type="InterPro" id="IPR036523">
    <property type="entry name" value="SurE-like_sf"/>
</dbReference>
<dbReference type="NCBIfam" id="NF001490">
    <property type="entry name" value="PRK00346.1-4"/>
    <property type="match status" value="1"/>
</dbReference>
<dbReference type="NCBIfam" id="TIGR00087">
    <property type="entry name" value="surE"/>
    <property type="match status" value="1"/>
</dbReference>
<dbReference type="PANTHER" id="PTHR30457">
    <property type="entry name" value="5'-NUCLEOTIDASE SURE"/>
    <property type="match status" value="1"/>
</dbReference>
<dbReference type="PANTHER" id="PTHR30457:SF12">
    <property type="entry name" value="5'_3'-NUCLEOTIDASE SURE"/>
    <property type="match status" value="1"/>
</dbReference>
<dbReference type="Pfam" id="PF01975">
    <property type="entry name" value="SurE"/>
    <property type="match status" value="1"/>
</dbReference>
<dbReference type="SUPFAM" id="SSF64167">
    <property type="entry name" value="SurE-like"/>
    <property type="match status" value="1"/>
</dbReference>
<evidence type="ECO:0000255" key="1">
    <source>
        <dbReference type="HAMAP-Rule" id="MF_00060"/>
    </source>
</evidence>